<organism>
    <name type="scientific">Vibrio cholerae serotype O1 (strain ATCC 39541 / Classical Ogawa 395 / O395)</name>
    <dbReference type="NCBI Taxonomy" id="345073"/>
    <lineage>
        <taxon>Bacteria</taxon>
        <taxon>Pseudomonadati</taxon>
        <taxon>Pseudomonadota</taxon>
        <taxon>Gammaproteobacteria</taxon>
        <taxon>Vibrionales</taxon>
        <taxon>Vibrionaceae</taxon>
        <taxon>Vibrio</taxon>
    </lineage>
</organism>
<proteinExistence type="inferred from homology"/>
<protein>
    <recommendedName>
        <fullName evidence="1">Sulfate adenylyltransferase subunit 2</fullName>
        <ecNumber evidence="1">2.7.7.4</ecNumber>
    </recommendedName>
    <alternativeName>
        <fullName evidence="1">ATP-sulfurylase small subunit</fullName>
    </alternativeName>
    <alternativeName>
        <fullName evidence="1">Sulfate adenylate transferase</fullName>
        <shortName evidence="1">SAT</shortName>
    </alternativeName>
</protein>
<keyword id="KW-0067">ATP-binding</keyword>
<keyword id="KW-0547">Nucleotide-binding</keyword>
<keyword id="KW-0548">Nucleotidyltransferase</keyword>
<keyword id="KW-0808">Transferase</keyword>
<gene>
    <name evidence="1" type="primary">cysD</name>
    <name type="ordered locus">VC0395_A2137</name>
    <name type="ordered locus">VC395_2672</name>
</gene>
<feature type="chain" id="PRO_1000071168" description="Sulfate adenylyltransferase subunit 2">
    <location>
        <begin position="1"/>
        <end position="302"/>
    </location>
</feature>
<feature type="region of interest" description="Disordered" evidence="2">
    <location>
        <begin position="280"/>
        <end position="302"/>
    </location>
</feature>
<accession>A5F579</accession>
<accession>C3LXF8</accession>
<name>CYSD_VIBC3</name>
<reference key="1">
    <citation type="submission" date="2007-03" db="EMBL/GenBank/DDBJ databases">
        <authorList>
            <person name="Heidelberg J."/>
        </authorList>
    </citation>
    <scope>NUCLEOTIDE SEQUENCE [LARGE SCALE GENOMIC DNA]</scope>
    <source>
        <strain>ATCC 39541 / Classical Ogawa 395 / O395</strain>
    </source>
</reference>
<reference key="2">
    <citation type="journal article" date="2008" name="PLoS ONE">
        <title>A recalibrated molecular clock and independent origins for the cholera pandemic clones.</title>
        <authorList>
            <person name="Feng L."/>
            <person name="Reeves P.R."/>
            <person name="Lan R."/>
            <person name="Ren Y."/>
            <person name="Gao C."/>
            <person name="Zhou Z."/>
            <person name="Ren Y."/>
            <person name="Cheng J."/>
            <person name="Wang W."/>
            <person name="Wang J."/>
            <person name="Qian W."/>
            <person name="Li D."/>
            <person name="Wang L."/>
        </authorList>
    </citation>
    <scope>NUCLEOTIDE SEQUENCE [LARGE SCALE GENOMIC DNA]</scope>
    <source>
        <strain>ATCC 39541 / Classical Ogawa 395 / O395</strain>
    </source>
</reference>
<dbReference type="EC" id="2.7.7.4" evidence="1"/>
<dbReference type="EMBL" id="CP000627">
    <property type="protein sequence ID" value="ABQ20682.1"/>
    <property type="molecule type" value="Genomic_DNA"/>
</dbReference>
<dbReference type="EMBL" id="CP001235">
    <property type="protein sequence ID" value="ACP10658.1"/>
    <property type="molecule type" value="Genomic_DNA"/>
</dbReference>
<dbReference type="RefSeq" id="WP_000372748.1">
    <property type="nucleotide sequence ID" value="NZ_CP045719.1"/>
</dbReference>
<dbReference type="SMR" id="A5F579"/>
<dbReference type="KEGG" id="vco:VC0395_A2137"/>
<dbReference type="KEGG" id="vcr:VC395_2672"/>
<dbReference type="PATRIC" id="fig|345073.21.peg.2571"/>
<dbReference type="eggNOG" id="COG0175">
    <property type="taxonomic scope" value="Bacteria"/>
</dbReference>
<dbReference type="HOGENOM" id="CLU_043026_0_0_6"/>
<dbReference type="OrthoDB" id="9772604at2"/>
<dbReference type="UniPathway" id="UPA00140">
    <property type="reaction ID" value="UER00204"/>
</dbReference>
<dbReference type="Proteomes" id="UP000000249">
    <property type="component" value="Chromosome 2"/>
</dbReference>
<dbReference type="GO" id="GO:0005524">
    <property type="term" value="F:ATP binding"/>
    <property type="evidence" value="ECO:0007669"/>
    <property type="project" value="UniProtKB-KW"/>
</dbReference>
<dbReference type="GO" id="GO:0004781">
    <property type="term" value="F:sulfate adenylyltransferase (ATP) activity"/>
    <property type="evidence" value="ECO:0007669"/>
    <property type="project" value="UniProtKB-UniRule"/>
</dbReference>
<dbReference type="GO" id="GO:0070814">
    <property type="term" value="P:hydrogen sulfide biosynthetic process"/>
    <property type="evidence" value="ECO:0007669"/>
    <property type="project" value="UniProtKB-UniRule"/>
</dbReference>
<dbReference type="GO" id="GO:0000103">
    <property type="term" value="P:sulfate assimilation"/>
    <property type="evidence" value="ECO:0007669"/>
    <property type="project" value="UniProtKB-UniRule"/>
</dbReference>
<dbReference type="CDD" id="cd23946">
    <property type="entry name" value="Sulfate_adenylyltransferase_2"/>
    <property type="match status" value="1"/>
</dbReference>
<dbReference type="FunFam" id="3.40.50.620:FF:000002">
    <property type="entry name" value="Sulfate adenylyltransferase subunit 2"/>
    <property type="match status" value="1"/>
</dbReference>
<dbReference type="Gene3D" id="3.40.50.620">
    <property type="entry name" value="HUPs"/>
    <property type="match status" value="1"/>
</dbReference>
<dbReference type="HAMAP" id="MF_00064">
    <property type="entry name" value="Sulf_adenylyltr_sub2"/>
    <property type="match status" value="1"/>
</dbReference>
<dbReference type="InterPro" id="IPR002500">
    <property type="entry name" value="PAPS_reduct_dom"/>
</dbReference>
<dbReference type="InterPro" id="IPR014729">
    <property type="entry name" value="Rossmann-like_a/b/a_fold"/>
</dbReference>
<dbReference type="InterPro" id="IPR011784">
    <property type="entry name" value="SO4_adenylTrfase_ssu"/>
</dbReference>
<dbReference type="InterPro" id="IPR050128">
    <property type="entry name" value="Sulfate_adenylyltrnsfr_sub2"/>
</dbReference>
<dbReference type="NCBIfam" id="TIGR02039">
    <property type="entry name" value="CysD"/>
    <property type="match status" value="1"/>
</dbReference>
<dbReference type="NCBIfam" id="NF003587">
    <property type="entry name" value="PRK05253.1"/>
    <property type="match status" value="1"/>
</dbReference>
<dbReference type="NCBIfam" id="NF009214">
    <property type="entry name" value="PRK12563.1"/>
    <property type="match status" value="1"/>
</dbReference>
<dbReference type="PANTHER" id="PTHR43196">
    <property type="entry name" value="SULFATE ADENYLYLTRANSFERASE SUBUNIT 2"/>
    <property type="match status" value="1"/>
</dbReference>
<dbReference type="PANTHER" id="PTHR43196:SF1">
    <property type="entry name" value="SULFATE ADENYLYLTRANSFERASE SUBUNIT 2"/>
    <property type="match status" value="1"/>
</dbReference>
<dbReference type="Pfam" id="PF01507">
    <property type="entry name" value="PAPS_reduct"/>
    <property type="match status" value="1"/>
</dbReference>
<dbReference type="PIRSF" id="PIRSF002936">
    <property type="entry name" value="CysDAde_trans"/>
    <property type="match status" value="1"/>
</dbReference>
<dbReference type="SUPFAM" id="SSF52402">
    <property type="entry name" value="Adenine nucleotide alpha hydrolases-like"/>
    <property type="match status" value="1"/>
</dbReference>
<sequence length="302" mass="35043">MDQQRLTHLKQLEAESIHIIREVAAEFDNPVMMYSIGKDSSVMLHLTRKAFYPGKIPFPLLHVDTDWKFRDMITFRDATAKKYGFDLIVHKNPEGLAAGINPFDHGSSKHTDIMKTQGLKQALNKYGFDAAFGGARRDEEKSRAKERVYSFRDKNHTWDPKNQRPELWRTYNGQINKGESIRVFPLSNWTELDIWQYIYLENIEIVPLYLADVRPVVQRDGMLIMVDDDRMKLREGEQIEHKSVRFRTLGCYPLTGAIESQANTLTEIIEEMLVATSSERQGRAIDHDQSGSMELKKRQGYF</sequence>
<comment type="function">
    <text evidence="1">With CysN forms the ATP sulfurylase (ATPS) that catalyzes the adenylation of sulfate producing adenosine 5'-phosphosulfate (APS) and diphosphate, the first enzymatic step in sulfur assimilation pathway. APS synthesis involves the formation of a high-energy phosphoric-sulfuric acid anhydride bond driven by GTP hydrolysis by CysN coupled to ATP hydrolysis by CysD.</text>
</comment>
<comment type="catalytic activity">
    <reaction evidence="1">
        <text>sulfate + ATP + H(+) = adenosine 5'-phosphosulfate + diphosphate</text>
        <dbReference type="Rhea" id="RHEA:18133"/>
        <dbReference type="ChEBI" id="CHEBI:15378"/>
        <dbReference type="ChEBI" id="CHEBI:16189"/>
        <dbReference type="ChEBI" id="CHEBI:30616"/>
        <dbReference type="ChEBI" id="CHEBI:33019"/>
        <dbReference type="ChEBI" id="CHEBI:58243"/>
        <dbReference type="EC" id="2.7.7.4"/>
    </reaction>
</comment>
<comment type="pathway">
    <text evidence="1">Sulfur metabolism; hydrogen sulfide biosynthesis; sulfite from sulfate: step 1/3.</text>
</comment>
<comment type="subunit">
    <text evidence="1">Heterodimer composed of CysD, the smaller subunit, and CysN.</text>
</comment>
<comment type="similarity">
    <text evidence="1">Belongs to the PAPS reductase family. CysD subfamily.</text>
</comment>
<evidence type="ECO:0000255" key="1">
    <source>
        <dbReference type="HAMAP-Rule" id="MF_00064"/>
    </source>
</evidence>
<evidence type="ECO:0000256" key="2">
    <source>
        <dbReference type="SAM" id="MobiDB-lite"/>
    </source>
</evidence>